<evidence type="ECO:0000255" key="1">
    <source>
        <dbReference type="HAMAP-Rule" id="MF_01200"/>
    </source>
</evidence>
<sequence>MKKEVIIALDFPTLEKTLEFLDKFKEEKLFVKVGMELYLQNGPIVIDEIKKRGHKIFLDLKLHDIPNTVYSAVKGLAKFNIDILTVHAAGGSEMLKGAKRAMTEAGVNTKVIAITQLTSTSEEDMRKEQNIQTSIEESVLNYARLAKESGVDGVVSSVLETKKIREQSGEEFIIINPGIRLAEDSKGDQKRVATPIDANRDGASYIVVGRSITGNENPEERYRLIKNMFEMGDKYVE</sequence>
<name>PYRF_FUSNN</name>
<gene>
    <name evidence="1" type="primary">pyrF</name>
    <name type="ordered locus">FN0426</name>
</gene>
<protein>
    <recommendedName>
        <fullName evidence="1">Orotidine 5'-phosphate decarboxylase</fullName>
        <ecNumber evidence="1">4.1.1.23</ecNumber>
    </recommendedName>
    <alternativeName>
        <fullName evidence="1">OMP decarboxylase</fullName>
        <shortName evidence="1">OMPDCase</shortName>
        <shortName evidence="1">OMPdecase</shortName>
    </alternativeName>
</protein>
<dbReference type="EC" id="4.1.1.23" evidence="1"/>
<dbReference type="EMBL" id="AE009951">
    <property type="protein sequence ID" value="AAL94629.1"/>
    <property type="molecule type" value="Genomic_DNA"/>
</dbReference>
<dbReference type="RefSeq" id="NP_603330.1">
    <property type="nucleotide sequence ID" value="NC_003454.1"/>
</dbReference>
<dbReference type="RefSeq" id="WP_011016383.1">
    <property type="nucleotide sequence ID" value="NZ_OZ209243.1"/>
</dbReference>
<dbReference type="SMR" id="Q8RG83"/>
<dbReference type="FunCoup" id="Q8RG83">
    <property type="interactions" value="159"/>
</dbReference>
<dbReference type="STRING" id="190304.FN0426"/>
<dbReference type="PaxDb" id="190304-FN0426"/>
<dbReference type="EnsemblBacteria" id="AAL94629">
    <property type="protein sequence ID" value="AAL94629"/>
    <property type="gene ID" value="FN0426"/>
</dbReference>
<dbReference type="GeneID" id="79783436"/>
<dbReference type="KEGG" id="fnu:FN0426"/>
<dbReference type="PATRIC" id="fig|190304.8.peg.1003"/>
<dbReference type="eggNOG" id="COG0284">
    <property type="taxonomic scope" value="Bacteria"/>
</dbReference>
<dbReference type="HOGENOM" id="CLU_067069_1_1_0"/>
<dbReference type="InParanoid" id="Q8RG83"/>
<dbReference type="BioCyc" id="FNUC190304:G1FZS-1020-MONOMER"/>
<dbReference type="UniPathway" id="UPA00070">
    <property type="reaction ID" value="UER00120"/>
</dbReference>
<dbReference type="Proteomes" id="UP000002521">
    <property type="component" value="Chromosome"/>
</dbReference>
<dbReference type="GO" id="GO:0005829">
    <property type="term" value="C:cytosol"/>
    <property type="evidence" value="ECO:0000318"/>
    <property type="project" value="GO_Central"/>
</dbReference>
<dbReference type="GO" id="GO:0004590">
    <property type="term" value="F:orotidine-5'-phosphate decarboxylase activity"/>
    <property type="evidence" value="ECO:0000318"/>
    <property type="project" value="GO_Central"/>
</dbReference>
<dbReference type="GO" id="GO:0006207">
    <property type="term" value="P:'de novo' pyrimidine nucleobase biosynthetic process"/>
    <property type="evidence" value="ECO:0000318"/>
    <property type="project" value="GO_Central"/>
</dbReference>
<dbReference type="GO" id="GO:0044205">
    <property type="term" value="P:'de novo' UMP biosynthetic process"/>
    <property type="evidence" value="ECO:0007669"/>
    <property type="project" value="UniProtKB-UniRule"/>
</dbReference>
<dbReference type="CDD" id="cd04725">
    <property type="entry name" value="OMP_decarboxylase_like"/>
    <property type="match status" value="1"/>
</dbReference>
<dbReference type="FunFam" id="3.20.20.70:FF:000015">
    <property type="entry name" value="Orotidine 5'-phosphate decarboxylase"/>
    <property type="match status" value="1"/>
</dbReference>
<dbReference type="Gene3D" id="3.20.20.70">
    <property type="entry name" value="Aldolase class I"/>
    <property type="match status" value="1"/>
</dbReference>
<dbReference type="HAMAP" id="MF_01200_B">
    <property type="entry name" value="OMPdecase_type1_B"/>
    <property type="match status" value="1"/>
</dbReference>
<dbReference type="InterPro" id="IPR013785">
    <property type="entry name" value="Aldolase_TIM"/>
</dbReference>
<dbReference type="InterPro" id="IPR014732">
    <property type="entry name" value="OMPdecase"/>
</dbReference>
<dbReference type="InterPro" id="IPR018089">
    <property type="entry name" value="OMPdecase_AS"/>
</dbReference>
<dbReference type="InterPro" id="IPR047596">
    <property type="entry name" value="OMPdecase_bac"/>
</dbReference>
<dbReference type="InterPro" id="IPR001754">
    <property type="entry name" value="OMPdeCOase_dom"/>
</dbReference>
<dbReference type="InterPro" id="IPR011060">
    <property type="entry name" value="RibuloseP-bd_barrel"/>
</dbReference>
<dbReference type="NCBIfam" id="NF001273">
    <property type="entry name" value="PRK00230.1"/>
    <property type="match status" value="1"/>
</dbReference>
<dbReference type="NCBIfam" id="TIGR01740">
    <property type="entry name" value="pyrF"/>
    <property type="match status" value="1"/>
</dbReference>
<dbReference type="PANTHER" id="PTHR32119">
    <property type="entry name" value="OROTIDINE 5'-PHOSPHATE DECARBOXYLASE"/>
    <property type="match status" value="1"/>
</dbReference>
<dbReference type="PANTHER" id="PTHR32119:SF2">
    <property type="entry name" value="OROTIDINE 5'-PHOSPHATE DECARBOXYLASE"/>
    <property type="match status" value="1"/>
</dbReference>
<dbReference type="Pfam" id="PF00215">
    <property type="entry name" value="OMPdecase"/>
    <property type="match status" value="1"/>
</dbReference>
<dbReference type="SMART" id="SM00934">
    <property type="entry name" value="OMPdecase"/>
    <property type="match status" value="1"/>
</dbReference>
<dbReference type="SUPFAM" id="SSF51366">
    <property type="entry name" value="Ribulose-phoshate binding barrel"/>
    <property type="match status" value="1"/>
</dbReference>
<dbReference type="PROSITE" id="PS00156">
    <property type="entry name" value="OMPDECASE"/>
    <property type="match status" value="1"/>
</dbReference>
<accession>Q8RG83</accession>
<feature type="chain" id="PRO_0000134543" description="Orotidine 5'-phosphate decarboxylase">
    <location>
        <begin position="1"/>
        <end position="237"/>
    </location>
</feature>
<feature type="active site" description="Proton donor" evidence="1">
    <location>
        <position position="61"/>
    </location>
</feature>
<feature type="binding site" evidence="1">
    <location>
        <position position="10"/>
    </location>
    <ligand>
        <name>substrate</name>
    </ligand>
</feature>
<feature type="binding site" evidence="1">
    <location>
        <position position="32"/>
    </location>
    <ligand>
        <name>substrate</name>
    </ligand>
</feature>
<feature type="binding site" evidence="1">
    <location>
        <begin position="59"/>
        <end position="68"/>
    </location>
    <ligand>
        <name>substrate</name>
    </ligand>
</feature>
<feature type="binding site" evidence="1">
    <location>
        <position position="118"/>
    </location>
    <ligand>
        <name>substrate</name>
    </ligand>
</feature>
<feature type="binding site" evidence="1">
    <location>
        <position position="180"/>
    </location>
    <ligand>
        <name>substrate</name>
    </ligand>
</feature>
<feature type="binding site" evidence="1">
    <location>
        <position position="189"/>
    </location>
    <ligand>
        <name>substrate</name>
    </ligand>
</feature>
<feature type="binding site" evidence="1">
    <location>
        <position position="209"/>
    </location>
    <ligand>
        <name>substrate</name>
    </ligand>
</feature>
<feature type="binding site" evidence="1">
    <location>
        <position position="210"/>
    </location>
    <ligand>
        <name>substrate</name>
    </ligand>
</feature>
<reference key="1">
    <citation type="journal article" date="2002" name="J. Bacteriol.">
        <title>Genome sequence and analysis of the oral bacterium Fusobacterium nucleatum strain ATCC 25586.</title>
        <authorList>
            <person name="Kapatral V."/>
            <person name="Anderson I."/>
            <person name="Ivanova N."/>
            <person name="Reznik G."/>
            <person name="Los T."/>
            <person name="Lykidis A."/>
            <person name="Bhattacharyya A."/>
            <person name="Bartman A."/>
            <person name="Gardner W."/>
            <person name="Grechkin G."/>
            <person name="Zhu L."/>
            <person name="Vasieva O."/>
            <person name="Chu L."/>
            <person name="Kogan Y."/>
            <person name="Chaga O."/>
            <person name="Goltsman E."/>
            <person name="Bernal A."/>
            <person name="Larsen N."/>
            <person name="D'Souza M."/>
            <person name="Walunas T."/>
            <person name="Pusch G."/>
            <person name="Haselkorn R."/>
            <person name="Fonstein M."/>
            <person name="Kyrpides N.C."/>
            <person name="Overbeek R."/>
        </authorList>
    </citation>
    <scope>NUCLEOTIDE SEQUENCE [LARGE SCALE GENOMIC DNA]</scope>
    <source>
        <strain>ATCC 25586 / DSM 15643 / BCRC 10681 / CIP 101130 / JCM 8532 / KCTC 2640 / LMG 13131 / VPI 4355</strain>
    </source>
</reference>
<proteinExistence type="inferred from homology"/>
<comment type="function">
    <text evidence="1">Catalyzes the decarboxylation of orotidine 5'-monophosphate (OMP) to uridine 5'-monophosphate (UMP).</text>
</comment>
<comment type="catalytic activity">
    <reaction evidence="1">
        <text>orotidine 5'-phosphate + H(+) = UMP + CO2</text>
        <dbReference type="Rhea" id="RHEA:11596"/>
        <dbReference type="ChEBI" id="CHEBI:15378"/>
        <dbReference type="ChEBI" id="CHEBI:16526"/>
        <dbReference type="ChEBI" id="CHEBI:57538"/>
        <dbReference type="ChEBI" id="CHEBI:57865"/>
        <dbReference type="EC" id="4.1.1.23"/>
    </reaction>
</comment>
<comment type="pathway">
    <text evidence="1">Pyrimidine metabolism; UMP biosynthesis via de novo pathway; UMP from orotate: step 2/2.</text>
</comment>
<comment type="subunit">
    <text evidence="1">Homodimer.</text>
</comment>
<comment type="similarity">
    <text evidence="1">Belongs to the OMP decarboxylase family. Type 1 subfamily.</text>
</comment>
<organism>
    <name type="scientific">Fusobacterium nucleatum subsp. nucleatum (strain ATCC 25586 / DSM 15643 / BCRC 10681 / CIP 101130 / JCM 8532 / KCTC 2640 / LMG 13131 / VPI 4355)</name>
    <dbReference type="NCBI Taxonomy" id="190304"/>
    <lineage>
        <taxon>Bacteria</taxon>
        <taxon>Fusobacteriati</taxon>
        <taxon>Fusobacteriota</taxon>
        <taxon>Fusobacteriia</taxon>
        <taxon>Fusobacteriales</taxon>
        <taxon>Fusobacteriaceae</taxon>
        <taxon>Fusobacterium</taxon>
    </lineage>
</organism>
<keyword id="KW-0210">Decarboxylase</keyword>
<keyword id="KW-0456">Lyase</keyword>
<keyword id="KW-0665">Pyrimidine biosynthesis</keyword>
<keyword id="KW-1185">Reference proteome</keyword>